<organism>
    <name type="scientific">Ureaplasma parvum serovar 3 (strain ATCC 27815 / 27 / NCTC 11736)</name>
    <dbReference type="NCBI Taxonomy" id="505682"/>
    <lineage>
        <taxon>Bacteria</taxon>
        <taxon>Bacillati</taxon>
        <taxon>Mycoplasmatota</taxon>
        <taxon>Mycoplasmoidales</taxon>
        <taxon>Mycoplasmoidaceae</taxon>
        <taxon>Ureaplasma</taxon>
    </lineage>
</organism>
<reference key="1">
    <citation type="submission" date="2008-02" db="EMBL/GenBank/DDBJ databases">
        <title>Genome sequence of Ureaplasma parvum serovar 3.</title>
        <authorList>
            <person name="Methe B.A."/>
            <person name="Glass J."/>
            <person name="Waites K."/>
            <person name="Shrivastava S."/>
        </authorList>
    </citation>
    <scope>NUCLEOTIDE SEQUENCE [LARGE SCALE GENOMIC DNA]</scope>
    <source>
        <strain>ATCC 27815 / 27 / NCTC 11736</strain>
    </source>
</reference>
<protein>
    <recommendedName>
        <fullName evidence="1">Probable transcriptional regulatory protein UPA3_0303</fullName>
    </recommendedName>
</protein>
<feature type="chain" id="PRO_1000083175" description="Probable transcriptional regulatory protein UPA3_0303">
    <location>
        <begin position="1"/>
        <end position="236"/>
    </location>
</feature>
<comment type="subcellular location">
    <subcellularLocation>
        <location evidence="1">Cytoplasm</location>
    </subcellularLocation>
</comment>
<comment type="similarity">
    <text evidence="1">Belongs to the TACO1 family.</text>
</comment>
<name>Y303_UREP2</name>
<sequence length="236" mass="26782">MPRKHLIASGINKKQQQQAKIWMKCAKEIKAAAKMGGPNPEANSRLKVAIERALNNNLSRDSIERNINGASKDIDNLKELTYEGYGPNGLAIIVRALTDNEQRTISAIRGYFSKLQGQIAKPNSVSMLFNECGQLLINKETKSLDEWFEILIDQSIIDINEDDKIIEILVKPEDFSTVKLILEKNNADIKSAEIKLIPNDFISLDEYARERLVRFVNACENDDDISWVITNYEEEL</sequence>
<dbReference type="EMBL" id="CP000942">
    <property type="protein sequence ID" value="ACA32890.1"/>
    <property type="molecule type" value="Genomic_DNA"/>
</dbReference>
<dbReference type="RefSeq" id="WP_006688835.1">
    <property type="nucleotide sequence ID" value="NC_010503.1"/>
</dbReference>
<dbReference type="SMR" id="B1AIT3"/>
<dbReference type="GeneID" id="29672584"/>
<dbReference type="KEGG" id="upa:UPA3_0303"/>
<dbReference type="HOGENOM" id="CLU_062974_2_2_14"/>
<dbReference type="Proteomes" id="UP000002162">
    <property type="component" value="Chromosome"/>
</dbReference>
<dbReference type="GO" id="GO:0005829">
    <property type="term" value="C:cytosol"/>
    <property type="evidence" value="ECO:0007669"/>
    <property type="project" value="TreeGrafter"/>
</dbReference>
<dbReference type="GO" id="GO:0003677">
    <property type="term" value="F:DNA binding"/>
    <property type="evidence" value="ECO:0007669"/>
    <property type="project" value="UniProtKB-UniRule"/>
</dbReference>
<dbReference type="GO" id="GO:0006355">
    <property type="term" value="P:regulation of DNA-templated transcription"/>
    <property type="evidence" value="ECO:0007669"/>
    <property type="project" value="UniProtKB-UniRule"/>
</dbReference>
<dbReference type="Gene3D" id="1.10.10.200">
    <property type="match status" value="1"/>
</dbReference>
<dbReference type="Gene3D" id="3.30.70.980">
    <property type="match status" value="2"/>
</dbReference>
<dbReference type="HAMAP" id="MF_00693">
    <property type="entry name" value="Transcrip_reg_TACO1"/>
    <property type="match status" value="1"/>
</dbReference>
<dbReference type="InterPro" id="IPR017856">
    <property type="entry name" value="Integrase-like_N"/>
</dbReference>
<dbReference type="InterPro" id="IPR048300">
    <property type="entry name" value="TACO1_YebC-like_2nd/3rd_dom"/>
</dbReference>
<dbReference type="InterPro" id="IPR049083">
    <property type="entry name" value="TACO1_YebC_N"/>
</dbReference>
<dbReference type="InterPro" id="IPR002876">
    <property type="entry name" value="Transcrip_reg_TACO1-like"/>
</dbReference>
<dbReference type="InterPro" id="IPR026564">
    <property type="entry name" value="Transcrip_reg_TACO1-like_dom3"/>
</dbReference>
<dbReference type="InterPro" id="IPR029072">
    <property type="entry name" value="YebC-like"/>
</dbReference>
<dbReference type="NCBIfam" id="NF009044">
    <property type="entry name" value="PRK12378.1"/>
    <property type="match status" value="1"/>
</dbReference>
<dbReference type="NCBIfam" id="TIGR01033">
    <property type="entry name" value="YebC/PmpR family DNA-binding transcriptional regulator"/>
    <property type="match status" value="1"/>
</dbReference>
<dbReference type="PANTHER" id="PTHR12532:SF6">
    <property type="entry name" value="TRANSCRIPTIONAL REGULATORY PROTEIN YEBC-RELATED"/>
    <property type="match status" value="1"/>
</dbReference>
<dbReference type="PANTHER" id="PTHR12532">
    <property type="entry name" value="TRANSLATIONAL ACTIVATOR OF CYTOCHROME C OXIDASE 1"/>
    <property type="match status" value="1"/>
</dbReference>
<dbReference type="Pfam" id="PF20772">
    <property type="entry name" value="TACO1_YebC_N"/>
    <property type="match status" value="1"/>
</dbReference>
<dbReference type="Pfam" id="PF01709">
    <property type="entry name" value="Transcrip_reg"/>
    <property type="match status" value="1"/>
</dbReference>
<dbReference type="SUPFAM" id="SSF75625">
    <property type="entry name" value="YebC-like"/>
    <property type="match status" value="1"/>
</dbReference>
<keyword id="KW-0963">Cytoplasm</keyword>
<keyword id="KW-0238">DNA-binding</keyword>
<keyword id="KW-0804">Transcription</keyword>
<keyword id="KW-0805">Transcription regulation</keyword>
<proteinExistence type="inferred from homology"/>
<gene>
    <name type="ordered locus">UPA3_0303</name>
</gene>
<evidence type="ECO:0000255" key="1">
    <source>
        <dbReference type="HAMAP-Rule" id="MF_00693"/>
    </source>
</evidence>
<accession>B1AIT3</accession>